<sequence>MKKVTAMLFSMAVGLNAVSMAAKAKASEEQETDVLLIGGGIMSATLGTYLRELEPEWSMTMVERLEGVAQESSNGWNNAGTGHSALMELNYTPQNADGSISIEKAVAINEAFQISRQFWAHQVERGVLRTPRSFINTVPHMSFVWGEDNVNFLRARYAALQQSSLFRGMRYSEDHAQIKEWAPLVMEGRDPQQKVAATRTEIGTDVNYGEITRQLIASLQKKSNFSLQLSSEVRALKRNDDNTWTVTVADLKNGTAQNIRAKFVFIGAGGAALKLLQESGIPEAKDYAGFPVGGQFLVSENPDVVNHHLAKVYGKASVGAPPMSVPHIDTRVLDGKRVVLFGPFATFSTKFLKNGSLWDLMSSTTTSNVMPMMHVGLDNFDLVKYLVSQVMLSEEDRFEALKEYYPQAKKEDWRLWQAGQRVQIIKRDAEKGGVLRLGTEVVSDQQGTIAALLGASPGASTAAPIMLDLLEKVFGDRVSSPQWQAMLKAIVPSYGRKLNGDVAATERELQYTSEVLGLKYDKPQAADSTPKPQLKPKPVQKEVADIAL</sequence>
<keyword id="KW-0274">FAD</keyword>
<keyword id="KW-0285">Flavoprotein</keyword>
<keyword id="KW-0560">Oxidoreductase</keyword>
<keyword id="KW-0816">Tricarboxylic acid cycle</keyword>
<accession>A8A273</accession>
<dbReference type="EC" id="1.1.5.4" evidence="1"/>
<dbReference type="EMBL" id="CP000802">
    <property type="protein sequence ID" value="ABV06627.1"/>
    <property type="molecule type" value="Genomic_DNA"/>
</dbReference>
<dbReference type="RefSeq" id="WP_000758070.1">
    <property type="nucleotide sequence ID" value="NC_009800.1"/>
</dbReference>
<dbReference type="SMR" id="A8A273"/>
<dbReference type="KEGG" id="ecx:EcHS_A2349"/>
<dbReference type="HOGENOM" id="CLU_028151_0_0_6"/>
<dbReference type="UniPathway" id="UPA00223">
    <property type="reaction ID" value="UER01008"/>
</dbReference>
<dbReference type="GO" id="GO:0047545">
    <property type="term" value="F:2-hydroxyglutarate dehydrogenase activity"/>
    <property type="evidence" value="ECO:0007669"/>
    <property type="project" value="TreeGrafter"/>
</dbReference>
<dbReference type="GO" id="GO:0008924">
    <property type="term" value="F:L-malate dehydrogenase (quinone) activity"/>
    <property type="evidence" value="ECO:0007669"/>
    <property type="project" value="UniProtKB-UniRule"/>
</dbReference>
<dbReference type="GO" id="GO:0006099">
    <property type="term" value="P:tricarboxylic acid cycle"/>
    <property type="evidence" value="ECO:0007669"/>
    <property type="project" value="UniProtKB-UniRule"/>
</dbReference>
<dbReference type="Gene3D" id="3.30.9.10">
    <property type="entry name" value="D-Amino Acid Oxidase, subunit A, domain 2"/>
    <property type="match status" value="1"/>
</dbReference>
<dbReference type="Gene3D" id="3.50.50.60">
    <property type="entry name" value="FAD/NAD(P)-binding domain"/>
    <property type="match status" value="1"/>
</dbReference>
<dbReference type="HAMAP" id="MF_00212">
    <property type="entry name" value="MQO"/>
    <property type="match status" value="1"/>
</dbReference>
<dbReference type="InterPro" id="IPR036188">
    <property type="entry name" value="FAD/NAD-bd_sf"/>
</dbReference>
<dbReference type="InterPro" id="IPR006231">
    <property type="entry name" value="MQO"/>
</dbReference>
<dbReference type="NCBIfam" id="TIGR01320">
    <property type="entry name" value="mal_quin_oxido"/>
    <property type="match status" value="1"/>
</dbReference>
<dbReference type="NCBIfam" id="NF003603">
    <property type="entry name" value="PRK05257.1-1"/>
    <property type="match status" value="1"/>
</dbReference>
<dbReference type="NCBIfam" id="NF003605">
    <property type="entry name" value="PRK05257.1-4"/>
    <property type="match status" value="1"/>
</dbReference>
<dbReference type="NCBIfam" id="NF003606">
    <property type="entry name" value="PRK05257.2-1"/>
    <property type="match status" value="1"/>
</dbReference>
<dbReference type="NCBIfam" id="NF003608">
    <property type="entry name" value="PRK05257.2-4"/>
    <property type="match status" value="1"/>
</dbReference>
<dbReference type="NCBIfam" id="NF003611">
    <property type="entry name" value="PRK05257.3-2"/>
    <property type="match status" value="1"/>
</dbReference>
<dbReference type="NCBIfam" id="NF009875">
    <property type="entry name" value="PRK13339.1"/>
    <property type="match status" value="1"/>
</dbReference>
<dbReference type="PANTHER" id="PTHR43104">
    <property type="entry name" value="L-2-HYDROXYGLUTARATE DEHYDROGENASE, MITOCHONDRIAL"/>
    <property type="match status" value="1"/>
</dbReference>
<dbReference type="PANTHER" id="PTHR43104:SF2">
    <property type="entry name" value="L-2-HYDROXYGLUTARATE DEHYDROGENASE, MITOCHONDRIAL"/>
    <property type="match status" value="1"/>
</dbReference>
<dbReference type="Pfam" id="PF06039">
    <property type="entry name" value="Mqo"/>
    <property type="match status" value="1"/>
</dbReference>
<dbReference type="SUPFAM" id="SSF51905">
    <property type="entry name" value="FAD/NAD(P)-binding domain"/>
    <property type="match status" value="1"/>
</dbReference>
<feature type="chain" id="PRO_1000058627" description="Probable malate:quinone oxidoreductase">
    <location>
        <begin position="1"/>
        <end position="548"/>
    </location>
</feature>
<feature type="region of interest" description="Disordered" evidence="2">
    <location>
        <begin position="522"/>
        <end position="548"/>
    </location>
</feature>
<feature type="compositionally biased region" description="Basic and acidic residues" evidence="2">
    <location>
        <begin position="539"/>
        <end position="548"/>
    </location>
</feature>
<gene>
    <name evidence="1" type="primary">mqo</name>
    <name type="ordered locus">EcHS_A2349</name>
</gene>
<proteinExistence type="inferred from homology"/>
<name>MQO_ECOHS</name>
<evidence type="ECO:0000255" key="1">
    <source>
        <dbReference type="HAMAP-Rule" id="MF_00212"/>
    </source>
</evidence>
<evidence type="ECO:0000256" key="2">
    <source>
        <dbReference type="SAM" id="MobiDB-lite"/>
    </source>
</evidence>
<protein>
    <recommendedName>
        <fullName evidence="1">Probable malate:quinone oxidoreductase</fullName>
        <ecNumber evidence="1">1.1.5.4</ecNumber>
    </recommendedName>
    <alternativeName>
        <fullName evidence="1">MQO</fullName>
    </alternativeName>
    <alternativeName>
        <fullName evidence="1">Malate dehydrogenase [quinone]</fullName>
    </alternativeName>
</protein>
<reference key="1">
    <citation type="journal article" date="2008" name="J. Bacteriol.">
        <title>The pangenome structure of Escherichia coli: comparative genomic analysis of E. coli commensal and pathogenic isolates.</title>
        <authorList>
            <person name="Rasko D.A."/>
            <person name="Rosovitz M.J."/>
            <person name="Myers G.S.A."/>
            <person name="Mongodin E.F."/>
            <person name="Fricke W.F."/>
            <person name="Gajer P."/>
            <person name="Crabtree J."/>
            <person name="Sebaihia M."/>
            <person name="Thomson N.R."/>
            <person name="Chaudhuri R."/>
            <person name="Henderson I.R."/>
            <person name="Sperandio V."/>
            <person name="Ravel J."/>
        </authorList>
    </citation>
    <scope>NUCLEOTIDE SEQUENCE [LARGE SCALE GENOMIC DNA]</scope>
    <source>
        <strain>HS</strain>
    </source>
</reference>
<comment type="catalytic activity">
    <reaction evidence="1">
        <text>(S)-malate + a quinone = a quinol + oxaloacetate</text>
        <dbReference type="Rhea" id="RHEA:46012"/>
        <dbReference type="ChEBI" id="CHEBI:15589"/>
        <dbReference type="ChEBI" id="CHEBI:16452"/>
        <dbReference type="ChEBI" id="CHEBI:24646"/>
        <dbReference type="ChEBI" id="CHEBI:132124"/>
        <dbReference type="EC" id="1.1.5.4"/>
    </reaction>
</comment>
<comment type="cofactor">
    <cofactor evidence="1">
        <name>FAD</name>
        <dbReference type="ChEBI" id="CHEBI:57692"/>
    </cofactor>
</comment>
<comment type="pathway">
    <text evidence="1">Carbohydrate metabolism; tricarboxylic acid cycle; oxaloacetate from (S)-malate (quinone route): step 1/1.</text>
</comment>
<comment type="similarity">
    <text evidence="1">Belongs to the MQO family.</text>
</comment>
<organism>
    <name type="scientific">Escherichia coli O9:H4 (strain HS)</name>
    <dbReference type="NCBI Taxonomy" id="331112"/>
    <lineage>
        <taxon>Bacteria</taxon>
        <taxon>Pseudomonadati</taxon>
        <taxon>Pseudomonadota</taxon>
        <taxon>Gammaproteobacteria</taxon>
        <taxon>Enterobacterales</taxon>
        <taxon>Enterobacteriaceae</taxon>
        <taxon>Escherichia</taxon>
    </lineage>
</organism>